<proteinExistence type="evidence at protein level"/>
<accession>Q8CGU1</accession>
<accession>Q5DTX0</accession>
<accession>Q9D935</accession>
<keyword id="KW-0010">Activator</keyword>
<keyword id="KW-0175">Coiled coil</keyword>
<keyword id="KW-0963">Cytoplasm</keyword>
<keyword id="KW-0479">Metal-binding</keyword>
<keyword id="KW-0539">Nucleus</keyword>
<keyword id="KW-0597">Phosphoprotein</keyword>
<keyword id="KW-1185">Reference proteome</keyword>
<keyword id="KW-0804">Transcription</keyword>
<keyword id="KW-0805">Transcription regulation</keyword>
<keyword id="KW-0879">Wnt signaling pathway</keyword>
<keyword id="KW-0862">Zinc</keyword>
<keyword id="KW-0863">Zinc-finger</keyword>
<organism>
    <name type="scientific">Mus musculus</name>
    <name type="common">Mouse</name>
    <dbReference type="NCBI Taxonomy" id="10090"/>
    <lineage>
        <taxon>Eukaryota</taxon>
        <taxon>Metazoa</taxon>
        <taxon>Chordata</taxon>
        <taxon>Craniata</taxon>
        <taxon>Vertebrata</taxon>
        <taxon>Euteleostomi</taxon>
        <taxon>Mammalia</taxon>
        <taxon>Eutheria</taxon>
        <taxon>Euarchontoglires</taxon>
        <taxon>Glires</taxon>
        <taxon>Rodentia</taxon>
        <taxon>Myomorpha</taxon>
        <taxon>Muroidea</taxon>
        <taxon>Muridae</taxon>
        <taxon>Murinae</taxon>
        <taxon>Mus</taxon>
        <taxon>Mus</taxon>
    </lineage>
</organism>
<reference key="1">
    <citation type="journal article" date="2003" name="Mol. Cell">
        <title>CoCoA, a nuclear receptor coactivator which acts through an N-terminal activation domain of p160 coactivators.</title>
        <authorList>
            <person name="Kim J.H."/>
            <person name="Li H."/>
            <person name="Stallcup M.R."/>
        </authorList>
    </citation>
    <scope>NUCLEOTIDE SEQUENCE [MRNA]</scope>
    <scope>FUNCTION</scope>
    <scope>INTERACTION WITH GRIP1</scope>
    <scope>TISSUE SPECIFICITY</scope>
</reference>
<reference key="2">
    <citation type="journal article" date="2005" name="Science">
        <title>The transcriptional landscape of the mammalian genome.</title>
        <authorList>
            <person name="Carninci P."/>
            <person name="Kasukawa T."/>
            <person name="Katayama S."/>
            <person name="Gough J."/>
            <person name="Frith M.C."/>
            <person name="Maeda N."/>
            <person name="Oyama R."/>
            <person name="Ravasi T."/>
            <person name="Lenhard B."/>
            <person name="Wells C."/>
            <person name="Kodzius R."/>
            <person name="Shimokawa K."/>
            <person name="Bajic V.B."/>
            <person name="Brenner S.E."/>
            <person name="Batalov S."/>
            <person name="Forrest A.R."/>
            <person name="Zavolan M."/>
            <person name="Davis M.J."/>
            <person name="Wilming L.G."/>
            <person name="Aidinis V."/>
            <person name="Allen J.E."/>
            <person name="Ambesi-Impiombato A."/>
            <person name="Apweiler R."/>
            <person name="Aturaliya R.N."/>
            <person name="Bailey T.L."/>
            <person name="Bansal M."/>
            <person name="Baxter L."/>
            <person name="Beisel K.W."/>
            <person name="Bersano T."/>
            <person name="Bono H."/>
            <person name="Chalk A.M."/>
            <person name="Chiu K.P."/>
            <person name="Choudhary V."/>
            <person name="Christoffels A."/>
            <person name="Clutterbuck D.R."/>
            <person name="Crowe M.L."/>
            <person name="Dalla E."/>
            <person name="Dalrymple B.P."/>
            <person name="de Bono B."/>
            <person name="Della Gatta G."/>
            <person name="di Bernardo D."/>
            <person name="Down T."/>
            <person name="Engstrom P."/>
            <person name="Fagiolini M."/>
            <person name="Faulkner G."/>
            <person name="Fletcher C.F."/>
            <person name="Fukushima T."/>
            <person name="Furuno M."/>
            <person name="Futaki S."/>
            <person name="Gariboldi M."/>
            <person name="Georgii-Hemming P."/>
            <person name="Gingeras T.R."/>
            <person name="Gojobori T."/>
            <person name="Green R.E."/>
            <person name="Gustincich S."/>
            <person name="Harbers M."/>
            <person name="Hayashi Y."/>
            <person name="Hensch T.K."/>
            <person name="Hirokawa N."/>
            <person name="Hill D."/>
            <person name="Huminiecki L."/>
            <person name="Iacono M."/>
            <person name="Ikeo K."/>
            <person name="Iwama A."/>
            <person name="Ishikawa T."/>
            <person name="Jakt M."/>
            <person name="Kanapin A."/>
            <person name="Katoh M."/>
            <person name="Kawasawa Y."/>
            <person name="Kelso J."/>
            <person name="Kitamura H."/>
            <person name="Kitano H."/>
            <person name="Kollias G."/>
            <person name="Krishnan S.P."/>
            <person name="Kruger A."/>
            <person name="Kummerfeld S.K."/>
            <person name="Kurochkin I.V."/>
            <person name="Lareau L.F."/>
            <person name="Lazarevic D."/>
            <person name="Lipovich L."/>
            <person name="Liu J."/>
            <person name="Liuni S."/>
            <person name="McWilliam S."/>
            <person name="Madan Babu M."/>
            <person name="Madera M."/>
            <person name="Marchionni L."/>
            <person name="Matsuda H."/>
            <person name="Matsuzawa S."/>
            <person name="Miki H."/>
            <person name="Mignone F."/>
            <person name="Miyake S."/>
            <person name="Morris K."/>
            <person name="Mottagui-Tabar S."/>
            <person name="Mulder N."/>
            <person name="Nakano N."/>
            <person name="Nakauchi H."/>
            <person name="Ng P."/>
            <person name="Nilsson R."/>
            <person name="Nishiguchi S."/>
            <person name="Nishikawa S."/>
            <person name="Nori F."/>
            <person name="Ohara O."/>
            <person name="Okazaki Y."/>
            <person name="Orlando V."/>
            <person name="Pang K.C."/>
            <person name="Pavan W.J."/>
            <person name="Pavesi G."/>
            <person name="Pesole G."/>
            <person name="Petrovsky N."/>
            <person name="Piazza S."/>
            <person name="Reed J."/>
            <person name="Reid J.F."/>
            <person name="Ring B.Z."/>
            <person name="Ringwald M."/>
            <person name="Rost B."/>
            <person name="Ruan Y."/>
            <person name="Salzberg S.L."/>
            <person name="Sandelin A."/>
            <person name="Schneider C."/>
            <person name="Schoenbach C."/>
            <person name="Sekiguchi K."/>
            <person name="Semple C.A."/>
            <person name="Seno S."/>
            <person name="Sessa L."/>
            <person name="Sheng Y."/>
            <person name="Shibata Y."/>
            <person name="Shimada H."/>
            <person name="Shimada K."/>
            <person name="Silva D."/>
            <person name="Sinclair B."/>
            <person name="Sperling S."/>
            <person name="Stupka E."/>
            <person name="Sugiura K."/>
            <person name="Sultana R."/>
            <person name="Takenaka Y."/>
            <person name="Taki K."/>
            <person name="Tammoja K."/>
            <person name="Tan S.L."/>
            <person name="Tang S."/>
            <person name="Taylor M.S."/>
            <person name="Tegner J."/>
            <person name="Teichmann S.A."/>
            <person name="Ueda H.R."/>
            <person name="van Nimwegen E."/>
            <person name="Verardo R."/>
            <person name="Wei C.L."/>
            <person name="Yagi K."/>
            <person name="Yamanishi H."/>
            <person name="Zabarovsky E."/>
            <person name="Zhu S."/>
            <person name="Zimmer A."/>
            <person name="Hide W."/>
            <person name="Bult C."/>
            <person name="Grimmond S.M."/>
            <person name="Teasdale R.D."/>
            <person name="Liu E.T."/>
            <person name="Brusic V."/>
            <person name="Quackenbush J."/>
            <person name="Wahlestedt C."/>
            <person name="Mattick J.S."/>
            <person name="Hume D.A."/>
            <person name="Kai C."/>
            <person name="Sasaki D."/>
            <person name="Tomaru Y."/>
            <person name="Fukuda S."/>
            <person name="Kanamori-Katayama M."/>
            <person name="Suzuki M."/>
            <person name="Aoki J."/>
            <person name="Arakawa T."/>
            <person name="Iida J."/>
            <person name="Imamura K."/>
            <person name="Itoh M."/>
            <person name="Kato T."/>
            <person name="Kawaji H."/>
            <person name="Kawagashira N."/>
            <person name="Kawashima T."/>
            <person name="Kojima M."/>
            <person name="Kondo S."/>
            <person name="Konno H."/>
            <person name="Nakano K."/>
            <person name="Ninomiya N."/>
            <person name="Nishio T."/>
            <person name="Okada M."/>
            <person name="Plessy C."/>
            <person name="Shibata K."/>
            <person name="Shiraki T."/>
            <person name="Suzuki S."/>
            <person name="Tagami M."/>
            <person name="Waki K."/>
            <person name="Watahiki A."/>
            <person name="Okamura-Oho Y."/>
            <person name="Suzuki H."/>
            <person name="Kawai J."/>
            <person name="Hayashizaki Y."/>
        </authorList>
    </citation>
    <scope>NUCLEOTIDE SEQUENCE [LARGE SCALE MRNA]</scope>
    <source>
        <strain>C57BL/6J</strain>
        <tissue>Pancreas</tissue>
        <tissue>Urinary bladder</tissue>
    </source>
</reference>
<reference key="3">
    <citation type="submission" date="2005-02" db="EMBL/GenBank/DDBJ databases">
        <title>Prediction of the coding sequences of mouse homologues of KIAA gene. The complete nucleotide sequences of mouse KIAA-homologous cDNAs identified by screening of terminal sequences of cDNA clones randomly sampled from size-fractionated libraries.</title>
        <authorList>
            <person name="Okazaki N."/>
            <person name="Kikuno R.F."/>
            <person name="Ohara R."/>
            <person name="Inamoto S."/>
            <person name="Nagase T."/>
            <person name="Ohara O."/>
            <person name="Koga H."/>
        </authorList>
    </citation>
    <scope>NUCLEOTIDE SEQUENCE [LARGE SCALE MRNA]</scope>
    <source>
        <tissue>Fetal brain</tissue>
    </source>
</reference>
<reference key="4">
    <citation type="journal article" date="2004" name="Genome Res.">
        <title>The status, quality, and expansion of the NIH full-length cDNA project: the Mammalian Gene Collection (MGC).</title>
        <authorList>
            <consortium name="The MGC Project Team"/>
        </authorList>
    </citation>
    <scope>NUCLEOTIDE SEQUENCE [LARGE SCALE MRNA]</scope>
    <source>
        <strain>C57BL/6J</strain>
        <tissue>Brain</tissue>
    </source>
</reference>
<reference key="5">
    <citation type="journal article" date="2004" name="Biochem. Biophys. Res. Commun.">
        <title>Cellular signaling mediated by calphoglin-induced activation of IPP and PGM.</title>
        <authorList>
            <person name="Takahashi K."/>
            <person name="Inuzuka M."/>
            <person name="Ingi T."/>
        </authorList>
    </citation>
    <scope>TISSUE SPECIFICITY</scope>
</reference>
<reference key="6">
    <citation type="journal article" date="2004" name="J. Biol. Chem.">
        <title>Role of the coiled-coil coactivator (CoCoA) in aryl hydrocarbon receptor-mediated transcription.</title>
        <authorList>
            <person name="Kim J.H."/>
            <person name="Stallcup M.R."/>
        </authorList>
    </citation>
    <scope>INTERACTION WITH AHR AND ARNT</scope>
</reference>
<reference key="7">
    <citation type="journal article" date="2006" name="J. Biol. Chem.">
        <title>Differential use of functional domains by coiled-coil coactivator in its synergistic coactivator function with beta-catenin or GRIP1.</title>
        <authorList>
            <person name="Yang C.K."/>
            <person name="Kim J.H."/>
            <person name="Li H."/>
            <person name="Stallcup M.R."/>
        </authorList>
    </citation>
    <scope>INTERACTION WITH CTNNB; GRIP1 AND P300</scope>
</reference>
<reference key="8">
    <citation type="journal article" date="2006" name="Mol. Endocrinol.">
        <title>Role of the N-terminal activation domain of the coiled-coil coactivator in mediating transcriptional activation by beta-catenin.</title>
        <authorList>
            <person name="Yang C.K."/>
            <person name="Kim J.H."/>
            <person name="Stallcup M.R."/>
        </authorList>
    </citation>
    <scope>FUNCTION</scope>
    <scope>SUBCELLULAR LOCATION</scope>
    <scope>INTERACTION WITH CTNNB</scope>
    <scope>MUTAGENESIS OF PHE-17 AND VAL-20</scope>
</reference>
<reference key="9">
    <citation type="journal article" date="2010" name="Cell">
        <title>A tissue-specific atlas of mouse protein phosphorylation and expression.</title>
        <authorList>
            <person name="Huttlin E.L."/>
            <person name="Jedrychowski M.P."/>
            <person name="Elias J.E."/>
            <person name="Goswami T."/>
            <person name="Rad R."/>
            <person name="Beausoleil S.A."/>
            <person name="Villen J."/>
            <person name="Haas W."/>
            <person name="Sowa M.E."/>
            <person name="Gygi S.P."/>
        </authorList>
    </citation>
    <scope>IDENTIFICATION BY MASS SPECTROMETRY [LARGE SCALE ANALYSIS]</scope>
    <source>
        <tissue>Brain</tissue>
        <tissue>Heart</tissue>
        <tissue>Lung</tissue>
        <tissue>Testis</tissue>
    </source>
</reference>
<reference key="10">
    <citation type="journal article" date="2014" name="Genes Cells">
        <title>CCAR1/CoCoA pair-mediated recruitment of the Mediator defines a novel pathway for GATA1 function.</title>
        <authorList>
            <person name="Mizuta S."/>
            <person name="Minami T."/>
            <person name="Fujita H."/>
            <person name="Kaminaga C."/>
            <person name="Matsui K."/>
            <person name="Ishino R."/>
            <person name="Fujita A."/>
            <person name="Oda K."/>
            <person name="Kawai A."/>
            <person name="Hasegawa N."/>
            <person name="Urahama N."/>
            <person name="Roeder R.G."/>
            <person name="Ito M."/>
        </authorList>
    </citation>
    <scope>FUNCTION</scope>
    <scope>INTERACTION WITH CCAR1 AND GATA1</scope>
</reference>
<comment type="function">
    <text evidence="5 9 10">Functions as a coactivator for aryl hydrocarbon and nuclear receptors (NR). Recruited to promoters through its contact with the N-terminal basic helix-loop-helix-Per-Arnt-Sim (PAS) domain of transcription factors or coactivators, such as NCOA2. During ER-activation acts synergistically in combination with other NCOA2-binding proteins, such as EP300, CREBBP and CARM1. Involved in the transcriptional activation of target genes in the Wnt/CTNNB1 pathway. Functions as a secondary coactivator in LEF1-mediated transcriptional activation via its interaction with CTNNB1. Coactivator function for nuclear receptors and LEF1/CTNNB1 involves differential utilization of two different activation regions. In association with CCAR1 enhances GATA1- and MED1-mediated transcriptional activation from the gamma-globin promoter during erythroid differentiation of K562 erythroleukemia cells (PubMed:24245781).</text>
</comment>
<comment type="subunit">
    <text evidence="1 5 6 8 9 10">Part of a calphoglin complex consisting of CALCOCO1, PPA1 and PGM (By similarity). Interacts with the bHLH-PAS domains of GRIP1, AHR and ARNT. Interacts with CTNNB1 via both its N- and C-terminal regions. Interacts with EP300. Interacts with CCAR1 (via N-terminus) and GATA1.</text>
</comment>
<comment type="interaction">
    <interactant intactId="EBI-972374">
        <id>Q8CGU1</id>
    </interactant>
    <interactant intactId="EBI-972394">
        <id>O42486</id>
        <label>Bcat</label>
    </interactant>
    <organismsDiffer>true</organismsDiffer>
    <experiments>4</experiments>
</comment>
<comment type="subcellular location">
    <subcellularLocation>
        <location evidence="9">Cytoplasm</location>
    </subcellularLocation>
    <subcellularLocation>
        <location evidence="9">Nucleus</location>
    </subcellularLocation>
    <text>Shuttles between nucleus and cytoplasm.</text>
</comment>
<comment type="tissue specificity">
    <text evidence="5 7">Expressed in all tissues examined except spleen, with high levels of expression in the heart and kidney.</text>
</comment>
<comment type="domain">
    <text>The C-terminal activation region (AD) is used for downstream signaling. Seems to be essential for coactivator function with nuclear receptors and with the aryl hydrocarbon receptor.</text>
</comment>
<comment type="domain">
    <text>The N-terminal activation region (AD) is necessary and sufficient for synergistic activation of LEF1-mediated transcription by CTNNB1. Contains a EP3000 binding region which is important for synergistic cooperation.</text>
</comment>
<comment type="domain">
    <text>Recruitment by nuclear receptors is accomplished by the interaction of the coiled-coiled domain with p160 coactivators.</text>
</comment>
<comment type="similarity">
    <text evidence="11">Belongs to the CALCOCO family.</text>
</comment>
<comment type="sequence caution" evidence="11">
    <conflict type="erroneous initiation">
        <sequence resource="EMBL-CDS" id="BAD90452"/>
    </conflict>
</comment>
<gene>
    <name type="primary">Calcoco1</name>
    <name type="synonym">CocoA</name>
    <name type="synonym">Kiaa1536</name>
</gene>
<feature type="chain" id="PRO_0000308900" description="Calcium-binding and coiled-coil domain-containing protein 1">
    <location>
        <begin position="1"/>
        <end position="691"/>
    </location>
</feature>
<feature type="zinc finger region" description="UBZ1-type" evidence="3">
    <location>
        <begin position="653"/>
        <end position="679"/>
    </location>
</feature>
<feature type="region of interest" description="N-terminal AD (CTNNB1 binding site)">
    <location>
        <begin position="1"/>
        <end position="190"/>
    </location>
</feature>
<feature type="region of interest" description="p300 KIX-binding">
    <location>
        <begin position="1"/>
        <end position="30"/>
    </location>
</feature>
<feature type="region of interest" description="Interaction with GATA1" evidence="10">
    <location>
        <begin position="45"/>
        <end position="125"/>
    </location>
</feature>
<feature type="region of interest" description="C-terminal AD (CTNNB1 binding site); interaction with CCAR1" evidence="10">
    <location>
        <begin position="501"/>
        <end position="691"/>
    </location>
</feature>
<feature type="region of interest" description="Disordered" evidence="4">
    <location>
        <begin position="512"/>
        <end position="605"/>
    </location>
</feature>
<feature type="coiled-coil region" evidence="2">
    <location>
        <begin position="145"/>
        <end position="205"/>
    </location>
</feature>
<feature type="coiled-coil region" evidence="2">
    <location>
        <begin position="232"/>
        <end position="339"/>
    </location>
</feature>
<feature type="coiled-coil region" evidence="2">
    <location>
        <begin position="417"/>
        <end position="514"/>
    </location>
</feature>
<feature type="binding site" evidence="3">
    <location>
        <position position="656"/>
    </location>
    <ligand>
        <name>Zn(2+)</name>
        <dbReference type="ChEBI" id="CHEBI:29105"/>
    </ligand>
</feature>
<feature type="binding site" evidence="3">
    <location>
        <position position="659"/>
    </location>
    <ligand>
        <name>Zn(2+)</name>
        <dbReference type="ChEBI" id="CHEBI:29105"/>
    </ligand>
</feature>
<feature type="binding site" evidence="3">
    <location>
        <position position="675"/>
    </location>
    <ligand>
        <name>Zn(2+)</name>
        <dbReference type="ChEBI" id="CHEBI:29105"/>
    </ligand>
</feature>
<feature type="binding site" evidence="3">
    <location>
        <position position="679"/>
    </location>
    <ligand>
        <name>Zn(2+)</name>
        <dbReference type="ChEBI" id="CHEBI:29105"/>
    </ligand>
</feature>
<feature type="modified residue" description="Phosphoserine" evidence="1">
    <location>
        <position position="4"/>
    </location>
</feature>
<feature type="mutagenesis site" description="Loss of interaction with p300 KIX domain; eliminated the autonomous transactivation function." evidence="9">
    <original>F</original>
    <variation>A</variation>
    <location>
        <position position="17"/>
    </location>
</feature>
<feature type="mutagenesis site" description="Reduced binding to p300 KIX domain; severe reduction in the autonomous transactivation function." evidence="9">
    <original>V</original>
    <variation>A</variation>
    <location>
        <position position="20"/>
    </location>
</feature>
<feature type="mutagenesis site" description="Reduced binding to p300 KIX domain; severe reduction in the autonomous transactivation function." evidence="9">
    <original>V</original>
    <variation>P</variation>
    <location>
        <position position="20"/>
    </location>
</feature>
<feature type="sequence conflict" description="In Ref. 1; AAN10148 and 3; BAD90452." evidence="11" ref="1 3">
    <original>E</original>
    <variation>Q</variation>
    <location>
        <position position="301"/>
    </location>
</feature>
<name>CACO1_MOUSE</name>
<protein>
    <recommendedName>
        <fullName>Calcium-binding and coiled-coil domain-containing protein 1</fullName>
    </recommendedName>
    <alternativeName>
        <fullName>Coiled-coil coactivator protein</fullName>
    </alternativeName>
</protein>
<evidence type="ECO:0000250" key="1">
    <source>
        <dbReference type="UniProtKB" id="Q9P1Z2"/>
    </source>
</evidence>
<evidence type="ECO:0000255" key="2"/>
<evidence type="ECO:0000255" key="3">
    <source>
        <dbReference type="PROSITE-ProRule" id="PRU01253"/>
    </source>
</evidence>
<evidence type="ECO:0000256" key="4">
    <source>
        <dbReference type="SAM" id="MobiDB-lite"/>
    </source>
</evidence>
<evidence type="ECO:0000269" key="5">
    <source>
    </source>
</evidence>
<evidence type="ECO:0000269" key="6">
    <source>
    </source>
</evidence>
<evidence type="ECO:0000269" key="7">
    <source>
    </source>
</evidence>
<evidence type="ECO:0000269" key="8">
    <source>
    </source>
</evidence>
<evidence type="ECO:0000269" key="9">
    <source>
    </source>
</evidence>
<evidence type="ECO:0000269" key="10">
    <source>
    </source>
</evidence>
<evidence type="ECO:0000305" key="11"/>
<dbReference type="EMBL" id="AY131329">
    <property type="protein sequence ID" value="AAN10148.1"/>
    <property type="molecule type" value="mRNA"/>
</dbReference>
<dbReference type="EMBL" id="AK007393">
    <property type="protein sequence ID" value="BAB25009.1"/>
    <property type="molecule type" value="mRNA"/>
</dbReference>
<dbReference type="EMBL" id="AK035598">
    <property type="protein sequence ID" value="BAC29119.1"/>
    <property type="molecule type" value="mRNA"/>
</dbReference>
<dbReference type="EMBL" id="AK220400">
    <property type="protein sequence ID" value="BAD90452.1"/>
    <property type="status" value="ALT_INIT"/>
    <property type="molecule type" value="mRNA"/>
</dbReference>
<dbReference type="EMBL" id="BC054783">
    <property type="protein sequence ID" value="AAH54783.1"/>
    <property type="molecule type" value="mRNA"/>
</dbReference>
<dbReference type="CCDS" id="CCDS27889.1"/>
<dbReference type="RefSeq" id="NP_080468.1">
    <property type="nucleotide sequence ID" value="NM_026192.3"/>
</dbReference>
<dbReference type="SMR" id="Q8CGU1"/>
<dbReference type="BioGRID" id="212224">
    <property type="interactions" value="8"/>
</dbReference>
<dbReference type="FunCoup" id="Q8CGU1">
    <property type="interactions" value="1613"/>
</dbReference>
<dbReference type="IntAct" id="Q8CGU1">
    <property type="interactions" value="2"/>
</dbReference>
<dbReference type="STRING" id="10090.ENSMUSP00000023818"/>
<dbReference type="GlyGen" id="Q8CGU1">
    <property type="glycosylation" value="1 site, 1 N-linked glycan (1 site)"/>
</dbReference>
<dbReference type="iPTMnet" id="Q8CGU1"/>
<dbReference type="PhosphoSitePlus" id="Q8CGU1"/>
<dbReference type="SwissPalm" id="Q8CGU1"/>
<dbReference type="jPOST" id="Q8CGU1"/>
<dbReference type="PaxDb" id="10090-ENSMUSP00000023818"/>
<dbReference type="ProteomicsDB" id="281739"/>
<dbReference type="Pumba" id="Q8CGU1"/>
<dbReference type="Antibodypedia" id="27237">
    <property type="antibodies" value="106 antibodies from 22 providers"/>
</dbReference>
<dbReference type="Ensembl" id="ENSMUST00000023818.11">
    <property type="protein sequence ID" value="ENSMUSP00000023818.4"/>
    <property type="gene ID" value="ENSMUSG00000023055.11"/>
</dbReference>
<dbReference type="GeneID" id="67488"/>
<dbReference type="KEGG" id="mmu:67488"/>
<dbReference type="UCSC" id="uc007xws.2">
    <property type="organism name" value="mouse"/>
</dbReference>
<dbReference type="AGR" id="MGI:1914738"/>
<dbReference type="CTD" id="57658"/>
<dbReference type="MGI" id="MGI:1914738">
    <property type="gene designation" value="Calcoco1"/>
</dbReference>
<dbReference type="VEuPathDB" id="HostDB:ENSMUSG00000023055"/>
<dbReference type="eggNOG" id="ENOG502QR9J">
    <property type="taxonomic scope" value="Eukaryota"/>
</dbReference>
<dbReference type="GeneTree" id="ENSGT00950000183025"/>
<dbReference type="InParanoid" id="Q8CGU1"/>
<dbReference type="OMA" id="HNWASND"/>
<dbReference type="OrthoDB" id="10015001at2759"/>
<dbReference type="PhylomeDB" id="Q8CGU1"/>
<dbReference type="TreeFam" id="TF329501"/>
<dbReference type="BioGRID-ORCS" id="67488">
    <property type="hits" value="1 hit in 79 CRISPR screens"/>
</dbReference>
<dbReference type="CD-CODE" id="CE726F99">
    <property type="entry name" value="Postsynaptic density"/>
</dbReference>
<dbReference type="ChiTaRS" id="Calcoco1">
    <property type="organism name" value="mouse"/>
</dbReference>
<dbReference type="PRO" id="PR:Q8CGU1"/>
<dbReference type="Proteomes" id="UP000000589">
    <property type="component" value="Chromosome 15"/>
</dbReference>
<dbReference type="RNAct" id="Q8CGU1">
    <property type="molecule type" value="protein"/>
</dbReference>
<dbReference type="Bgee" id="ENSMUSG00000023055">
    <property type="expression patterns" value="Expressed in ascending aorta and 214 other cell types or tissues"/>
</dbReference>
<dbReference type="ExpressionAtlas" id="Q8CGU1">
    <property type="expression patterns" value="baseline and differential"/>
</dbReference>
<dbReference type="GO" id="GO:0000785">
    <property type="term" value="C:chromatin"/>
    <property type="evidence" value="ECO:0000314"/>
    <property type="project" value="MGI"/>
</dbReference>
<dbReference type="GO" id="GO:0005829">
    <property type="term" value="C:cytosol"/>
    <property type="evidence" value="ECO:0007669"/>
    <property type="project" value="Ensembl"/>
</dbReference>
<dbReference type="GO" id="GO:0005634">
    <property type="term" value="C:nucleus"/>
    <property type="evidence" value="ECO:0000305"/>
    <property type="project" value="HGNC-UCL"/>
</dbReference>
<dbReference type="GO" id="GO:0008013">
    <property type="term" value="F:beta-catenin binding"/>
    <property type="evidence" value="ECO:0007669"/>
    <property type="project" value="Ensembl"/>
</dbReference>
<dbReference type="GO" id="GO:0003682">
    <property type="term" value="F:chromatin binding"/>
    <property type="evidence" value="ECO:0000314"/>
    <property type="project" value="MGI"/>
</dbReference>
<dbReference type="GO" id="GO:0000978">
    <property type="term" value="F:RNA polymerase II cis-regulatory region sequence-specific DNA binding"/>
    <property type="evidence" value="ECO:0000250"/>
    <property type="project" value="UniProtKB"/>
</dbReference>
<dbReference type="GO" id="GO:0003713">
    <property type="term" value="F:transcription coactivator activity"/>
    <property type="evidence" value="ECO:0000314"/>
    <property type="project" value="HGNC-UCL"/>
</dbReference>
<dbReference type="GO" id="GO:0008270">
    <property type="term" value="F:zinc ion binding"/>
    <property type="evidence" value="ECO:0007669"/>
    <property type="project" value="UniProtKB-KW"/>
</dbReference>
<dbReference type="GO" id="GO:0030518">
    <property type="term" value="P:nuclear receptor-mediated steroid hormone signaling pathway"/>
    <property type="evidence" value="ECO:0000314"/>
    <property type="project" value="HGNC-UCL"/>
</dbReference>
<dbReference type="GO" id="GO:0010628">
    <property type="term" value="P:positive regulation of gene expression"/>
    <property type="evidence" value="ECO:0007669"/>
    <property type="project" value="Ensembl"/>
</dbReference>
<dbReference type="GO" id="GO:0045944">
    <property type="term" value="P:positive regulation of transcription by RNA polymerase II"/>
    <property type="evidence" value="ECO:0000314"/>
    <property type="project" value="HGNC-UCL"/>
</dbReference>
<dbReference type="GO" id="GO:0007165">
    <property type="term" value="P:signal transduction"/>
    <property type="evidence" value="ECO:0000314"/>
    <property type="project" value="HGNC-UCL"/>
</dbReference>
<dbReference type="GO" id="GO:0016055">
    <property type="term" value="P:Wnt signaling pathway"/>
    <property type="evidence" value="ECO:0007669"/>
    <property type="project" value="UniProtKB-KW"/>
</dbReference>
<dbReference type="FunFam" id="2.60.40.2840:FF:000004">
    <property type="entry name" value="Calcium-binding and coiled-coil domain-containing protein 1"/>
    <property type="match status" value="1"/>
</dbReference>
<dbReference type="Gene3D" id="2.60.40.2840">
    <property type="match status" value="1"/>
</dbReference>
<dbReference type="InterPro" id="IPR012852">
    <property type="entry name" value="CALCOCO1-like"/>
</dbReference>
<dbReference type="InterPro" id="IPR041641">
    <property type="entry name" value="CALCOCO1/2_Zn_UBZ1"/>
</dbReference>
<dbReference type="InterPro" id="IPR041611">
    <property type="entry name" value="SKICH"/>
</dbReference>
<dbReference type="InterPro" id="IPR051002">
    <property type="entry name" value="UBA_autophagy_assoc_protein"/>
</dbReference>
<dbReference type="PANTHER" id="PTHR31915:SF5">
    <property type="entry name" value="CALCIUM-BINDING AND COILED-COIL DOMAIN-CONTAINING PROTEIN 1"/>
    <property type="match status" value="1"/>
</dbReference>
<dbReference type="PANTHER" id="PTHR31915">
    <property type="entry name" value="SKICH DOMAIN-CONTAINING PROTEIN"/>
    <property type="match status" value="1"/>
</dbReference>
<dbReference type="Pfam" id="PF07888">
    <property type="entry name" value="CALCOCO1"/>
    <property type="match status" value="1"/>
</dbReference>
<dbReference type="Pfam" id="PF17751">
    <property type="entry name" value="SKICH"/>
    <property type="match status" value="1"/>
</dbReference>
<dbReference type="Pfam" id="PF18112">
    <property type="entry name" value="Zn-C2H2_12"/>
    <property type="match status" value="1"/>
</dbReference>
<dbReference type="SUPFAM" id="SSF57997">
    <property type="entry name" value="Tropomyosin"/>
    <property type="match status" value="1"/>
</dbReference>
<dbReference type="PROSITE" id="PS51905">
    <property type="entry name" value="ZF_UBZ1"/>
    <property type="match status" value="1"/>
</dbReference>
<sequence>MEESSLSRAPSRGGVNFLNVARTYIPNTKVECHYTLPPGTMPSASDWIGIFKVEAACVRDYHTFVWSSVPESTTDGSPTHASVQFQASYLPKPGAQLYQFRYVNRQGRVCGQSPPFQFREPRPMDELVTLEEADGGSDILLVVPKATVLQNQLDESQQERNDLMQLKLQLEDQVTELRSRVQELEAALATARQEHSELTEQYKGLSRSHGELSEERDILSQQQGDHVARILELEDDIQTMSDKVLMKEVELDRVRDTVKALTREQEKLLRQLKEFQADKEQSEAELQTVREENCCLNTELEEAKSRQEEQGAQVQRLKDKLAHMKDTLGQAQQKVAELEPLKEQLRGVQELAASSQQKAALLGEELASAAGARDRTIAELHRSRLEVAEVNGRLAELSLHMKEEKCQWSKERTGLLQSMEAEKDKILKLSAEILRLEKTVQEERTQSHVFKTELAREKDSSLVQLSESKRELTELRSALRVLQKEKEQLQTEKQELLEYMRKLEARLEKVADEKWTEDAATEDEEATAGLSCPASLTDSEDESPEDMRLPSYGLCESGNTSSSPPGPREPSSLVVINQPAPIAPQFSGPGEASSSDSEAEDEKSVLMAAVQSGGEEASLLLPELGSAFYDVASAFTVSSLSEASPGVPANPPWKECPICKERFPAESDKDALEGHMDGHFFFSTQDPFTFE</sequence>